<protein>
    <recommendedName>
        <fullName evidence="1">Photosystem I assembly protein Ycf3</fullName>
    </recommendedName>
</protein>
<proteinExistence type="inferred from homology"/>
<sequence>MPRSQINGNFIDKTFSIVANILLRIIPTTSGEKEAFTYYRDGMSAQSEGNYAEALQNYYEATRLEIDPYDRSYILYNIGLIHTSNGEHTKALEYYFRALERNPFLPQAFNNMAVICHYRGEQAIRQGDSEIAEAWSDQAAEYWKQAISLTPGNYIEAHNWLKITGRFE</sequence>
<dbReference type="EMBL" id="DQ887677">
    <property type="protein sequence ID" value="ABI14473.1"/>
    <property type="molecule type" value="Genomic_DNA"/>
</dbReference>
<dbReference type="RefSeq" id="YP_784474.1">
    <property type="nucleotide sequence ID" value="NC_008457.1"/>
</dbReference>
<dbReference type="SMR" id="Q06GQ9"/>
<dbReference type="GeneID" id="4363737"/>
<dbReference type="GO" id="GO:0009535">
    <property type="term" value="C:chloroplast thylakoid membrane"/>
    <property type="evidence" value="ECO:0007669"/>
    <property type="project" value="UniProtKB-SubCell"/>
</dbReference>
<dbReference type="GO" id="GO:0015979">
    <property type="term" value="P:photosynthesis"/>
    <property type="evidence" value="ECO:0007669"/>
    <property type="project" value="UniProtKB-UniRule"/>
</dbReference>
<dbReference type="FunFam" id="1.25.40.10:FF:000004">
    <property type="entry name" value="Photosystem I assembly protein Ycf3"/>
    <property type="match status" value="1"/>
</dbReference>
<dbReference type="Gene3D" id="1.25.40.10">
    <property type="entry name" value="Tetratricopeptide repeat domain"/>
    <property type="match status" value="1"/>
</dbReference>
<dbReference type="HAMAP" id="MF_00439">
    <property type="entry name" value="Ycf3"/>
    <property type="match status" value="1"/>
</dbReference>
<dbReference type="InterPro" id="IPR022818">
    <property type="entry name" value="PSI_Ycf3_assembly"/>
</dbReference>
<dbReference type="InterPro" id="IPR011990">
    <property type="entry name" value="TPR-like_helical_dom_sf"/>
</dbReference>
<dbReference type="InterPro" id="IPR019734">
    <property type="entry name" value="TPR_rpt"/>
</dbReference>
<dbReference type="InterPro" id="IPR051685">
    <property type="entry name" value="Ycf3/AcsC/BcsC/TPR_MFPF"/>
</dbReference>
<dbReference type="NCBIfam" id="NF002725">
    <property type="entry name" value="PRK02603.1"/>
    <property type="match status" value="1"/>
</dbReference>
<dbReference type="PANTHER" id="PTHR44943">
    <property type="entry name" value="CELLULOSE SYNTHASE OPERON PROTEIN C"/>
    <property type="match status" value="1"/>
</dbReference>
<dbReference type="PANTHER" id="PTHR44943:SF8">
    <property type="entry name" value="TPR REPEAT-CONTAINING PROTEIN MJ0263"/>
    <property type="match status" value="1"/>
</dbReference>
<dbReference type="Pfam" id="PF00515">
    <property type="entry name" value="TPR_1"/>
    <property type="match status" value="1"/>
</dbReference>
<dbReference type="SMART" id="SM00028">
    <property type="entry name" value="TPR"/>
    <property type="match status" value="3"/>
</dbReference>
<dbReference type="SUPFAM" id="SSF48452">
    <property type="entry name" value="TPR-like"/>
    <property type="match status" value="1"/>
</dbReference>
<dbReference type="PROSITE" id="PS50005">
    <property type="entry name" value="TPR"/>
    <property type="match status" value="3"/>
</dbReference>
<dbReference type="PROSITE" id="PS50293">
    <property type="entry name" value="TPR_REGION"/>
    <property type="match status" value="1"/>
</dbReference>
<evidence type="ECO:0000255" key="1">
    <source>
        <dbReference type="HAMAP-Rule" id="MF_00439"/>
    </source>
</evidence>
<name>YCF3_PIPCE</name>
<geneLocation type="chloroplast"/>
<comment type="function">
    <text evidence="1">Essential for the assembly of the photosystem I (PSI) complex. May act as a chaperone-like factor to guide the assembly of the PSI subunits.</text>
</comment>
<comment type="subcellular location">
    <subcellularLocation>
        <location evidence="1">Plastid</location>
        <location evidence="1">Chloroplast thylakoid membrane</location>
        <topology evidence="1">Peripheral membrane protein</topology>
    </subcellularLocation>
</comment>
<comment type="similarity">
    <text evidence="1">Belongs to the Ycf3 family.</text>
</comment>
<gene>
    <name evidence="1" type="primary">ycf3</name>
</gene>
<organism>
    <name type="scientific">Piper cenocladum</name>
    <name type="common">Ant piper</name>
    <dbReference type="NCBI Taxonomy" id="398741"/>
    <lineage>
        <taxon>Eukaryota</taxon>
        <taxon>Viridiplantae</taxon>
        <taxon>Streptophyta</taxon>
        <taxon>Embryophyta</taxon>
        <taxon>Tracheophyta</taxon>
        <taxon>Spermatophyta</taxon>
        <taxon>Magnoliopsida</taxon>
        <taxon>Magnoliidae</taxon>
        <taxon>Piperales</taxon>
        <taxon>Piperaceae</taxon>
        <taxon>Piper</taxon>
    </lineage>
</organism>
<reference key="1">
    <citation type="journal article" date="2006" name="BMC Evol. Biol.">
        <title>Complete plastid genome sequences of Drimys, Liriodendron, and Piper: implications for the phylogenetic relationships of magnoliids.</title>
        <authorList>
            <person name="Cai Z."/>
            <person name="Penaflor C."/>
            <person name="Kuehl J.V."/>
            <person name="Leebens-Mack J."/>
            <person name="Carlson J.E."/>
            <person name="dePamphilis C.W."/>
            <person name="Boore J.L."/>
            <person name="Jansen R.K."/>
        </authorList>
    </citation>
    <scope>NUCLEOTIDE SEQUENCE [LARGE SCALE GENOMIC DNA]</scope>
</reference>
<feature type="chain" id="PRO_0000275632" description="Photosystem I assembly protein Ycf3">
    <location>
        <begin position="1"/>
        <end position="168"/>
    </location>
</feature>
<feature type="repeat" description="TPR 1">
    <location>
        <begin position="35"/>
        <end position="68"/>
    </location>
</feature>
<feature type="repeat" description="TPR 2">
    <location>
        <begin position="72"/>
        <end position="105"/>
    </location>
</feature>
<feature type="repeat" description="TPR 3">
    <location>
        <begin position="120"/>
        <end position="153"/>
    </location>
</feature>
<keyword id="KW-0150">Chloroplast</keyword>
<keyword id="KW-0472">Membrane</keyword>
<keyword id="KW-0602">Photosynthesis</keyword>
<keyword id="KW-0934">Plastid</keyword>
<keyword id="KW-0677">Repeat</keyword>
<keyword id="KW-0793">Thylakoid</keyword>
<keyword id="KW-0802">TPR repeat</keyword>
<accession>Q06GQ9</accession>